<name>RECG_BACSU</name>
<organism>
    <name type="scientific">Bacillus subtilis (strain 168)</name>
    <dbReference type="NCBI Taxonomy" id="224308"/>
    <lineage>
        <taxon>Bacteria</taxon>
        <taxon>Bacillati</taxon>
        <taxon>Bacillota</taxon>
        <taxon>Bacilli</taxon>
        <taxon>Bacillales</taxon>
        <taxon>Bacillaceae</taxon>
        <taxon>Bacillus</taxon>
    </lineage>
</organism>
<comment type="function">
    <text evidence="1 5 6 10">Critical role in recombination and DNA repair (PubMed:17640277). Helps process Holliday junction intermediates to mature products by catalyzing branch migration (PubMed:15533834, PubMed:34073022). Has a DNA unwinding activity characteristic of a DNA helicase with 3'-5' polarity (By similarity). Unwinds branched duplex DNA (Y-DNA), Holliday junction (HJ) DNA and partially replicated forks as well as catalyzing fork reversal/regression (PubMed:15533834, PubMed:34073022). Does not seem to unwind R-loops (PubMed:15533834). Inhibits the diadenylate cyclase (DAC) activity of DisA in the presence but not absence of HJ DNA, possibly by relocating DisA from the junction (PubMed:34073022).</text>
</comment>
<comment type="catalytic activity">
    <reaction evidence="1">
        <text>Couples ATP hydrolysis with the unwinding of duplex DNA by translocating in the 3'-5' direction.</text>
        <dbReference type="EC" id="5.6.2.4"/>
    </reaction>
</comment>
<comment type="catalytic activity">
    <reaction evidence="10">
        <text>ATP + H2O = ADP + phosphate + H(+)</text>
        <dbReference type="Rhea" id="RHEA:13065"/>
        <dbReference type="ChEBI" id="CHEBI:15377"/>
        <dbReference type="ChEBI" id="CHEBI:15378"/>
        <dbReference type="ChEBI" id="CHEBI:30616"/>
        <dbReference type="ChEBI" id="CHEBI:43474"/>
        <dbReference type="ChEBI" id="CHEBI:456216"/>
        <dbReference type="EC" id="5.6.2.4"/>
    </reaction>
</comment>
<comment type="activity regulation">
    <text evidence="10">Replication fork regression on Holliday junctions (HJ) is inhibited by DisA; DisA inhibits the ATPase activity of RecG (PubMed:34073022).</text>
</comment>
<comment type="subunit">
    <text evidence="2 7 8">Monomer (By similarity). Interacts with SSB (sbbA), via the latter's 6 C-terminal residues (PubMed:17853894, PubMed:21170359). Colocalizes with DNA pol III subunit gamma/tau (dnaX) (PubMed:17853894).</text>
</comment>
<comment type="subcellular location">
    <subcellularLocation>
        <location evidence="7">Cytoplasm</location>
        <location evidence="7">Nucleoid</location>
    </subcellularLocation>
    <text evidence="7">Localizes in tight foci to the chromosome replication center at mid-cell during most to all of the cell cycle (PubMed:17853894).</text>
</comment>
<comment type="domain">
    <text evidence="2">The wedge domain within the N-terminus inserts into the replication fork junction, where the lagging and leading strand split (By similarity).</text>
</comment>
<comment type="disruption phenotype">
    <text evidence="6 9">Decreased viability with a cell proliferation defect and an increase in anucleate cells, very sensitive to DNA damaging agents 4-nitroquinoline-1-oxide, methylmethane sulfonate and mitomycin C (PubMed:17640277). RecD2 is synthetically lethal with recG (PubMed:28527403).</text>
</comment>
<comment type="similarity">
    <text evidence="15">Belongs to the helicase family. RecG subfamily.</text>
</comment>
<dbReference type="EC" id="5.6.2.4" evidence="16"/>
<dbReference type="EMBL" id="Y13937">
    <property type="protein sequence ID" value="CAA74246.1"/>
    <property type="molecule type" value="Genomic_DNA"/>
</dbReference>
<dbReference type="EMBL" id="AL009126">
    <property type="protein sequence ID" value="CAB13460.1"/>
    <property type="molecule type" value="Genomic_DNA"/>
</dbReference>
<dbReference type="PIR" id="H69879">
    <property type="entry name" value="H69879"/>
</dbReference>
<dbReference type="RefSeq" id="NP_389469.1">
    <property type="nucleotide sequence ID" value="NC_000964.3"/>
</dbReference>
<dbReference type="RefSeq" id="WP_003244692.1">
    <property type="nucleotide sequence ID" value="NZ_OZ025638.1"/>
</dbReference>
<dbReference type="SMR" id="O34942"/>
<dbReference type="FunCoup" id="O34942">
    <property type="interactions" value="525"/>
</dbReference>
<dbReference type="STRING" id="224308.BSU15870"/>
<dbReference type="PaxDb" id="224308-BSU15870"/>
<dbReference type="EnsemblBacteria" id="CAB13460">
    <property type="protein sequence ID" value="CAB13460"/>
    <property type="gene ID" value="BSU_15870"/>
</dbReference>
<dbReference type="GeneID" id="936730"/>
<dbReference type="KEGG" id="bsu:BSU15870"/>
<dbReference type="PATRIC" id="fig|224308.179.peg.1727"/>
<dbReference type="eggNOG" id="COG1200">
    <property type="taxonomic scope" value="Bacteria"/>
</dbReference>
<dbReference type="InParanoid" id="O34942"/>
<dbReference type="OrthoDB" id="9804325at2"/>
<dbReference type="PhylomeDB" id="O34942"/>
<dbReference type="BioCyc" id="BSUB:BSU15870-MONOMER"/>
<dbReference type="Proteomes" id="UP000001570">
    <property type="component" value="Chromosome"/>
</dbReference>
<dbReference type="GO" id="GO:0005737">
    <property type="term" value="C:cytoplasm"/>
    <property type="evidence" value="ECO:0007669"/>
    <property type="project" value="UniProtKB-KW"/>
</dbReference>
<dbReference type="GO" id="GO:0009295">
    <property type="term" value="C:nucleoid"/>
    <property type="evidence" value="ECO:0007669"/>
    <property type="project" value="UniProtKB-SubCell"/>
</dbReference>
<dbReference type="GO" id="GO:0005524">
    <property type="term" value="F:ATP binding"/>
    <property type="evidence" value="ECO:0007669"/>
    <property type="project" value="UniProtKB-KW"/>
</dbReference>
<dbReference type="GO" id="GO:0016887">
    <property type="term" value="F:ATP hydrolysis activity"/>
    <property type="evidence" value="ECO:0007669"/>
    <property type="project" value="RHEA"/>
</dbReference>
<dbReference type="GO" id="GO:0003678">
    <property type="term" value="F:DNA helicase activity"/>
    <property type="evidence" value="ECO:0000318"/>
    <property type="project" value="GO_Central"/>
</dbReference>
<dbReference type="GO" id="GO:0061749">
    <property type="term" value="F:forked DNA-dependent helicase activity"/>
    <property type="evidence" value="ECO:0000314"/>
    <property type="project" value="UniProtKB"/>
</dbReference>
<dbReference type="GO" id="GO:0000400">
    <property type="term" value="F:four-way junction DNA binding"/>
    <property type="evidence" value="ECO:0000314"/>
    <property type="project" value="UniProtKB"/>
</dbReference>
<dbReference type="GO" id="GO:0006310">
    <property type="term" value="P:DNA recombination"/>
    <property type="evidence" value="ECO:0007669"/>
    <property type="project" value="UniProtKB-KW"/>
</dbReference>
<dbReference type="GO" id="GO:0006281">
    <property type="term" value="P:DNA repair"/>
    <property type="evidence" value="ECO:0000318"/>
    <property type="project" value="GO_Central"/>
</dbReference>
<dbReference type="GO" id="GO:0071932">
    <property type="term" value="P:replication fork reversal"/>
    <property type="evidence" value="ECO:0000314"/>
    <property type="project" value="UniProtKB"/>
</dbReference>
<dbReference type="CDD" id="cd17992">
    <property type="entry name" value="DEXHc_RecG"/>
    <property type="match status" value="1"/>
</dbReference>
<dbReference type="CDD" id="cd04488">
    <property type="entry name" value="RecG_wedge_OBF"/>
    <property type="match status" value="1"/>
</dbReference>
<dbReference type="CDD" id="cd18811">
    <property type="entry name" value="SF2_C_RecG"/>
    <property type="match status" value="1"/>
</dbReference>
<dbReference type="Gene3D" id="1.10.150.20">
    <property type="entry name" value="5' to 3' exonuclease, C-terminal subdomain"/>
    <property type="match status" value="1"/>
</dbReference>
<dbReference type="Gene3D" id="2.40.50.140">
    <property type="entry name" value="Nucleic acid-binding proteins"/>
    <property type="match status" value="1"/>
</dbReference>
<dbReference type="Gene3D" id="3.40.50.300">
    <property type="entry name" value="P-loop containing nucleotide triphosphate hydrolases"/>
    <property type="match status" value="2"/>
</dbReference>
<dbReference type="InterPro" id="IPR004609">
    <property type="entry name" value="ATP-dep_DNA_helicase_RecG"/>
</dbReference>
<dbReference type="InterPro" id="IPR011545">
    <property type="entry name" value="DEAD/DEAH_box_helicase_dom"/>
</dbReference>
<dbReference type="InterPro" id="IPR014001">
    <property type="entry name" value="Helicase_ATP-bd"/>
</dbReference>
<dbReference type="InterPro" id="IPR001650">
    <property type="entry name" value="Helicase_C-like"/>
</dbReference>
<dbReference type="InterPro" id="IPR012340">
    <property type="entry name" value="NA-bd_OB-fold"/>
</dbReference>
<dbReference type="InterPro" id="IPR027417">
    <property type="entry name" value="P-loop_NTPase"/>
</dbReference>
<dbReference type="InterPro" id="IPR047112">
    <property type="entry name" value="RecG/Mfd"/>
</dbReference>
<dbReference type="InterPro" id="IPR045562">
    <property type="entry name" value="RecG_dom3_C"/>
</dbReference>
<dbReference type="InterPro" id="IPR033454">
    <property type="entry name" value="RecG_wedge"/>
</dbReference>
<dbReference type="NCBIfam" id="NF008165">
    <property type="entry name" value="PRK10917.1-3"/>
    <property type="match status" value="1"/>
</dbReference>
<dbReference type="NCBIfam" id="NF008168">
    <property type="entry name" value="PRK10917.2-2"/>
    <property type="match status" value="1"/>
</dbReference>
<dbReference type="NCBIfam" id="TIGR00643">
    <property type="entry name" value="recG"/>
    <property type="match status" value="1"/>
</dbReference>
<dbReference type="PANTHER" id="PTHR47964">
    <property type="entry name" value="ATP-DEPENDENT DNA HELICASE HOMOLOG RECG, CHLOROPLASTIC"/>
    <property type="match status" value="1"/>
</dbReference>
<dbReference type="PANTHER" id="PTHR47964:SF1">
    <property type="entry name" value="ATP-DEPENDENT DNA HELICASE HOMOLOG RECG, CHLOROPLASTIC"/>
    <property type="match status" value="1"/>
</dbReference>
<dbReference type="Pfam" id="PF00270">
    <property type="entry name" value="DEAD"/>
    <property type="match status" value="1"/>
</dbReference>
<dbReference type="Pfam" id="PF00271">
    <property type="entry name" value="Helicase_C"/>
    <property type="match status" value="1"/>
</dbReference>
<dbReference type="Pfam" id="PF19833">
    <property type="entry name" value="RecG_dom3_C"/>
    <property type="match status" value="1"/>
</dbReference>
<dbReference type="Pfam" id="PF17191">
    <property type="entry name" value="RecG_wedge"/>
    <property type="match status" value="1"/>
</dbReference>
<dbReference type="SMART" id="SM00487">
    <property type="entry name" value="DEXDc"/>
    <property type="match status" value="1"/>
</dbReference>
<dbReference type="SMART" id="SM00490">
    <property type="entry name" value="HELICc"/>
    <property type="match status" value="1"/>
</dbReference>
<dbReference type="SUPFAM" id="SSF50249">
    <property type="entry name" value="Nucleic acid-binding proteins"/>
    <property type="match status" value="1"/>
</dbReference>
<dbReference type="SUPFAM" id="SSF52540">
    <property type="entry name" value="P-loop containing nucleoside triphosphate hydrolases"/>
    <property type="match status" value="2"/>
</dbReference>
<dbReference type="PROSITE" id="PS51192">
    <property type="entry name" value="HELICASE_ATP_BIND_1"/>
    <property type="match status" value="1"/>
</dbReference>
<dbReference type="PROSITE" id="PS51194">
    <property type="entry name" value="HELICASE_CTER"/>
    <property type="match status" value="1"/>
</dbReference>
<gene>
    <name evidence="13" type="primary">recG</name>
    <name evidence="14" type="synonym">ylpB</name>
    <name type="ordered locus">BSU15870</name>
</gene>
<reference key="1">
    <citation type="journal article" date="1998" name="Microbiology">
        <title>A 28 kbp segment from the spoVM region of the Bacillus subtilis 168 genome.</title>
        <authorList>
            <person name="Foulger D."/>
            <person name="Errington J."/>
        </authorList>
    </citation>
    <scope>NUCLEOTIDE SEQUENCE [GENOMIC DNA]</scope>
    <source>
        <strain>168</strain>
    </source>
</reference>
<reference key="2">
    <citation type="journal article" date="1997" name="Nature">
        <title>The complete genome sequence of the Gram-positive bacterium Bacillus subtilis.</title>
        <authorList>
            <person name="Kunst F."/>
            <person name="Ogasawara N."/>
            <person name="Moszer I."/>
            <person name="Albertini A.M."/>
            <person name="Alloni G."/>
            <person name="Azevedo V."/>
            <person name="Bertero M.G."/>
            <person name="Bessieres P."/>
            <person name="Bolotin A."/>
            <person name="Borchert S."/>
            <person name="Borriss R."/>
            <person name="Boursier L."/>
            <person name="Brans A."/>
            <person name="Braun M."/>
            <person name="Brignell S.C."/>
            <person name="Bron S."/>
            <person name="Brouillet S."/>
            <person name="Bruschi C.V."/>
            <person name="Caldwell B."/>
            <person name="Capuano V."/>
            <person name="Carter N.M."/>
            <person name="Choi S.-K."/>
            <person name="Codani J.-J."/>
            <person name="Connerton I.F."/>
            <person name="Cummings N.J."/>
            <person name="Daniel R.A."/>
            <person name="Denizot F."/>
            <person name="Devine K.M."/>
            <person name="Duesterhoeft A."/>
            <person name="Ehrlich S.D."/>
            <person name="Emmerson P.T."/>
            <person name="Entian K.-D."/>
            <person name="Errington J."/>
            <person name="Fabret C."/>
            <person name="Ferrari E."/>
            <person name="Foulger D."/>
            <person name="Fritz C."/>
            <person name="Fujita M."/>
            <person name="Fujita Y."/>
            <person name="Fuma S."/>
            <person name="Galizzi A."/>
            <person name="Galleron N."/>
            <person name="Ghim S.-Y."/>
            <person name="Glaser P."/>
            <person name="Goffeau A."/>
            <person name="Golightly E.J."/>
            <person name="Grandi G."/>
            <person name="Guiseppi G."/>
            <person name="Guy B.J."/>
            <person name="Haga K."/>
            <person name="Haiech J."/>
            <person name="Harwood C.R."/>
            <person name="Henaut A."/>
            <person name="Hilbert H."/>
            <person name="Holsappel S."/>
            <person name="Hosono S."/>
            <person name="Hullo M.-F."/>
            <person name="Itaya M."/>
            <person name="Jones L.-M."/>
            <person name="Joris B."/>
            <person name="Karamata D."/>
            <person name="Kasahara Y."/>
            <person name="Klaerr-Blanchard M."/>
            <person name="Klein C."/>
            <person name="Kobayashi Y."/>
            <person name="Koetter P."/>
            <person name="Koningstein G."/>
            <person name="Krogh S."/>
            <person name="Kumano M."/>
            <person name="Kurita K."/>
            <person name="Lapidus A."/>
            <person name="Lardinois S."/>
            <person name="Lauber J."/>
            <person name="Lazarevic V."/>
            <person name="Lee S.-M."/>
            <person name="Levine A."/>
            <person name="Liu H."/>
            <person name="Masuda S."/>
            <person name="Mauel C."/>
            <person name="Medigue C."/>
            <person name="Medina N."/>
            <person name="Mellado R.P."/>
            <person name="Mizuno M."/>
            <person name="Moestl D."/>
            <person name="Nakai S."/>
            <person name="Noback M."/>
            <person name="Noone D."/>
            <person name="O'Reilly M."/>
            <person name="Ogawa K."/>
            <person name="Ogiwara A."/>
            <person name="Oudega B."/>
            <person name="Park S.-H."/>
            <person name="Parro V."/>
            <person name="Pohl T.M."/>
            <person name="Portetelle D."/>
            <person name="Porwollik S."/>
            <person name="Prescott A.M."/>
            <person name="Presecan E."/>
            <person name="Pujic P."/>
            <person name="Purnelle B."/>
            <person name="Rapoport G."/>
            <person name="Rey M."/>
            <person name="Reynolds S."/>
            <person name="Rieger M."/>
            <person name="Rivolta C."/>
            <person name="Rocha E."/>
            <person name="Roche B."/>
            <person name="Rose M."/>
            <person name="Sadaie Y."/>
            <person name="Sato T."/>
            <person name="Scanlan E."/>
            <person name="Schleich S."/>
            <person name="Schroeter R."/>
            <person name="Scoffone F."/>
            <person name="Sekiguchi J."/>
            <person name="Sekowska A."/>
            <person name="Seror S.J."/>
            <person name="Serror P."/>
            <person name="Shin B.-S."/>
            <person name="Soldo B."/>
            <person name="Sorokin A."/>
            <person name="Tacconi E."/>
            <person name="Takagi T."/>
            <person name="Takahashi H."/>
            <person name="Takemaru K."/>
            <person name="Takeuchi M."/>
            <person name="Tamakoshi A."/>
            <person name="Tanaka T."/>
            <person name="Terpstra P."/>
            <person name="Tognoni A."/>
            <person name="Tosato V."/>
            <person name="Uchiyama S."/>
            <person name="Vandenbol M."/>
            <person name="Vannier F."/>
            <person name="Vassarotti A."/>
            <person name="Viari A."/>
            <person name="Wambutt R."/>
            <person name="Wedler E."/>
            <person name="Wedler H."/>
            <person name="Weitzenegger T."/>
            <person name="Winters P."/>
            <person name="Wipat A."/>
            <person name="Yamamoto H."/>
            <person name="Yamane K."/>
            <person name="Yasumoto K."/>
            <person name="Yata K."/>
            <person name="Yoshida K."/>
            <person name="Yoshikawa H.-F."/>
            <person name="Zumstein E."/>
            <person name="Yoshikawa H."/>
            <person name="Danchin A."/>
        </authorList>
    </citation>
    <scope>NUCLEOTIDE SEQUENCE [LARGE SCALE GENOMIC DNA]</scope>
    <source>
        <strain>168</strain>
    </source>
</reference>
<reference key="3">
    <citation type="journal article" date="2005" name="DNA Repair">
        <title>Conservation of RecG activity from pathogens to hyperthermophiles.</title>
        <authorList>
            <person name="Wen Q."/>
            <person name="Mahdi A.A."/>
            <person name="Briggs G.S."/>
            <person name="Sharples G.J."/>
            <person name="Lloyd R.G."/>
        </authorList>
    </citation>
    <scope>FUNCTION</scope>
    <scope>DNA-BINDING</scope>
</reference>
<reference key="4">
    <citation type="journal article" date="2007" name="Mol. Microbiol.">
        <title>Bacillus subtilis RecG branch migration translocase is required for DNA repair and chromosomal segregation.</title>
        <authorList>
            <person name="Sanchez H."/>
            <person name="Carrasco B."/>
            <person name="Cozar M.C."/>
            <person name="Alonso J.C."/>
        </authorList>
    </citation>
    <scope>FUNCTION</scope>
    <scope>DISRUPTION PHENOTYPE</scope>
    <source>
        <strain>168 / YB886 / BG214</strain>
    </source>
</reference>
<reference key="5">
    <citation type="journal article" date="2007" name="EMBO J.">
        <title>Anticipating chromosomal replication fork arrest: SSB targets repair DNA helicases to active forks.</title>
        <authorList>
            <person name="Lecointe F."/>
            <person name="Serena C."/>
            <person name="Velten M."/>
            <person name="Costes A."/>
            <person name="McGovern S."/>
            <person name="Meile J.C."/>
            <person name="Errington J."/>
            <person name="Ehrlich S.D."/>
            <person name="Noirot P."/>
            <person name="Polard P."/>
        </authorList>
    </citation>
    <scope>INTERACTION WITH SSBA</scope>
    <scope>INTERACTION WITH DNAX</scope>
    <scope>SUBCELLULAR LOCATION</scope>
    <source>
        <strain>168</strain>
    </source>
</reference>
<reference key="6">
    <citation type="journal article" date="2010" name="PLoS Genet.">
        <title>The C-terminal domain of the bacterial SSB protein acts as a DNA maintenance hub at active chromosome replication forks.</title>
        <authorList>
            <person name="Costes A."/>
            <person name="Lecointe F."/>
            <person name="McGovern S."/>
            <person name="Quevillon-Cheruel S."/>
            <person name="Polard P."/>
        </authorList>
    </citation>
    <scope>INTERACTION WITH SSBA</scope>
    <source>
        <strain>168</strain>
    </source>
</reference>
<reference key="7">
    <citation type="journal article" date="2017" name="DNA Repair">
        <title>Interplay between Bacillus subtilis RecD2 and the RecG or RuvAB helicase in recombinational repair.</title>
        <authorList>
            <person name="Torres R."/>
            <person name="Romero H."/>
            <person name="Rodriguez-Cerrato V."/>
            <person name="Alonso J.C."/>
        </authorList>
    </citation>
    <scope>DISRUPTION PHENOTYPE</scope>
    <source>
        <strain>168 / YB886 / BG214</strain>
    </source>
</reference>
<reference key="8">
    <citation type="journal article" date="2021" name="Cells">
        <title>DisA Limits RecG Activities at Stalled or Reversed Replication Forks.</title>
        <authorList>
            <person name="Torres R."/>
            <person name="Gandara C."/>
            <person name="Carrasco B."/>
            <person name="Baquedano I."/>
            <person name="Ayora S."/>
            <person name="Alonso J.C."/>
        </authorList>
    </citation>
    <scope>FUNCTION IN REPLICATION FORK REGRESSION</scope>
    <scope>ATPASE ACTIVITY</scope>
    <scope>ACTIVITY REGULATION</scope>
    <scope>DNA-BINDING</scope>
</reference>
<evidence type="ECO:0000250" key="1">
    <source>
        <dbReference type="UniProtKB" id="P24230"/>
    </source>
</evidence>
<evidence type="ECO:0000250" key="2">
    <source>
        <dbReference type="UniProtKB" id="Q9WY48"/>
    </source>
</evidence>
<evidence type="ECO:0000255" key="3">
    <source>
        <dbReference type="PROSITE-ProRule" id="PRU00541"/>
    </source>
</evidence>
<evidence type="ECO:0000255" key="4">
    <source>
        <dbReference type="PROSITE-ProRule" id="PRU00542"/>
    </source>
</evidence>
<evidence type="ECO:0000269" key="5">
    <source>
    </source>
</evidence>
<evidence type="ECO:0000269" key="6">
    <source>
    </source>
</evidence>
<evidence type="ECO:0000269" key="7">
    <source>
    </source>
</evidence>
<evidence type="ECO:0000269" key="8">
    <source>
    </source>
</evidence>
<evidence type="ECO:0000269" key="9">
    <source>
    </source>
</evidence>
<evidence type="ECO:0000269" key="10">
    <source>
    </source>
</evidence>
<evidence type="ECO:0000303" key="11">
    <source>
    </source>
</evidence>
<evidence type="ECO:0000303" key="12">
    <source>
    </source>
</evidence>
<evidence type="ECO:0000303" key="13">
    <source>
    </source>
</evidence>
<evidence type="ECO:0000303" key="14">
    <source>
    </source>
</evidence>
<evidence type="ECO:0000305" key="15"/>
<evidence type="ECO:0000305" key="16">
    <source>
    </source>
</evidence>
<keyword id="KW-0067">ATP-binding</keyword>
<keyword id="KW-0963">Cytoplasm</keyword>
<keyword id="KW-0227">DNA damage</keyword>
<keyword id="KW-0233">DNA recombination</keyword>
<keyword id="KW-0234">DNA repair</keyword>
<keyword id="KW-0238">DNA-binding</keyword>
<keyword id="KW-0347">Helicase</keyword>
<keyword id="KW-0378">Hydrolase</keyword>
<keyword id="KW-0413">Isomerase</keyword>
<keyword id="KW-0547">Nucleotide-binding</keyword>
<keyword id="KW-1185">Reference proteome</keyword>
<sequence>MKQHQQTSIANIKGIGPETEKTLNELGIYDISDLLNYFPYRYDDYELRDLEEVKHDERVTVEGKVHSEPSLTYYGKKRNRLTFRLLVGHYLITAVCFNRPYLKKKLSLGSVVTVSGKWDKHRQTISVQELKNGPHQEDKSIEPVYSVKENVTVKMMRRFIQQALTQYADSLPDPLPEKLRKSYKLPDYYQALKAMHQPETREALKLARRRFVYEEFLLFQLKMQAFRKAEREQTQGIRQRFSNEELMRFIKSLPFPLTNAQSRVLREITADMSSPYRMNRLLQGDVGSGKTAVAAIALYAAILSGYQGALMVPTEILAEQHADSLVSLFEKWDVSVALLTSSVKGKRRKELLERLAAGEIDILVGTHALIQDEVEFKALSLVITDEQHRFGVEQRKKLRNKGQDPDVLFMTATPIPRTLAITVFGEMDVSVIDEMPAGRKRIETYWVKHDMLDRILAFVEKELKQGRQAYIICPLIEESDKLDVQNAIDVYNMLSDIFRGKWNVGLMHGKLHSDEKDQVMREFSANHCQILVSTTVVEVGVNVPNATIMVIYDADRFGLSQLHQLRGRVGRGEHQSFCILMADPKSETGKERMRIMSETNDGFELSEKDLELRGPGDFFGKKQSGMPEFKVADMVHDYRALETARQDAANLVASDAFWKEPEYAVLRDELLKSGVMDGEKLS</sequence>
<protein>
    <recommendedName>
        <fullName>ATP-dependent DNA helicase RecG</fullName>
        <ecNumber evidence="16">5.6.2.4</ecNumber>
    </recommendedName>
    <alternativeName>
        <fullName evidence="12">Branch migration translocase RecG</fullName>
    </alternativeName>
    <alternativeName>
        <fullName evidence="11">DNA branch migration protein RecG</fullName>
    </alternativeName>
    <alternativeName>
        <fullName evidence="15">Probable DNA 3'-5' helicase RecG</fullName>
    </alternativeName>
</protein>
<proteinExistence type="evidence at protein level"/>
<accession>O34942</accession>
<feature type="chain" id="PRO_0000102138" description="ATP-dependent DNA helicase RecG">
    <location>
        <begin position="1"/>
        <end position="682"/>
    </location>
</feature>
<feature type="domain" description="Helicase ATP-binding" evidence="3">
    <location>
        <begin position="271"/>
        <end position="432"/>
    </location>
</feature>
<feature type="domain" description="Helicase C-terminal" evidence="4">
    <location>
        <begin position="451"/>
        <end position="611"/>
    </location>
</feature>
<feature type="region of interest" description="Wedge domain" evidence="2">
    <location>
        <begin position="46"/>
        <end position="139"/>
    </location>
</feature>
<feature type="short sequence motif" description="DEAH box" evidence="3">
    <location>
        <begin position="385"/>
        <end position="388"/>
    </location>
</feature>
<feature type="binding site" evidence="3">
    <location>
        <begin position="284"/>
        <end position="291"/>
    </location>
    <ligand>
        <name>ATP</name>
        <dbReference type="ChEBI" id="CHEBI:30616"/>
    </ligand>
</feature>